<gene>
    <name evidence="1" type="primary">rbcL</name>
</gene>
<organism>
    <name type="scientific">Galium elongatum</name>
    <name type="common">Great marsh bedstraw</name>
    <name type="synonym">Galium palustre subsp. elongatum</name>
    <dbReference type="NCBI Taxonomy" id="29791"/>
    <lineage>
        <taxon>Eukaryota</taxon>
        <taxon>Viridiplantae</taxon>
        <taxon>Streptophyta</taxon>
        <taxon>Embryophyta</taxon>
        <taxon>Tracheophyta</taxon>
        <taxon>Spermatophyta</taxon>
        <taxon>Magnoliopsida</taxon>
        <taxon>eudicotyledons</taxon>
        <taxon>Gunneridae</taxon>
        <taxon>Pentapetalae</taxon>
        <taxon>asterids</taxon>
        <taxon>lamiids</taxon>
        <taxon>Gentianales</taxon>
        <taxon>Rubiaceae</taxon>
        <taxon>Rubioideae</taxon>
        <taxon>Rubieae</taxon>
        <taxon>Galium</taxon>
    </lineage>
</organism>
<geneLocation type="chloroplast"/>
<comment type="function">
    <text evidence="1">RuBisCO catalyzes two reactions: the carboxylation of D-ribulose 1,5-bisphosphate, the primary event in carbon dioxide fixation, as well as the oxidative fragmentation of the pentose substrate in the photorespiration process. Both reactions occur simultaneously and in competition at the same active site.</text>
</comment>
<comment type="catalytic activity">
    <reaction evidence="1">
        <text>2 (2R)-3-phosphoglycerate + 2 H(+) = D-ribulose 1,5-bisphosphate + CO2 + H2O</text>
        <dbReference type="Rhea" id="RHEA:23124"/>
        <dbReference type="ChEBI" id="CHEBI:15377"/>
        <dbReference type="ChEBI" id="CHEBI:15378"/>
        <dbReference type="ChEBI" id="CHEBI:16526"/>
        <dbReference type="ChEBI" id="CHEBI:57870"/>
        <dbReference type="ChEBI" id="CHEBI:58272"/>
        <dbReference type="EC" id="4.1.1.39"/>
    </reaction>
</comment>
<comment type="catalytic activity">
    <reaction evidence="1">
        <text>D-ribulose 1,5-bisphosphate + O2 = 2-phosphoglycolate + (2R)-3-phosphoglycerate + 2 H(+)</text>
        <dbReference type="Rhea" id="RHEA:36631"/>
        <dbReference type="ChEBI" id="CHEBI:15378"/>
        <dbReference type="ChEBI" id="CHEBI:15379"/>
        <dbReference type="ChEBI" id="CHEBI:57870"/>
        <dbReference type="ChEBI" id="CHEBI:58033"/>
        <dbReference type="ChEBI" id="CHEBI:58272"/>
    </reaction>
</comment>
<comment type="cofactor">
    <cofactor evidence="1">
        <name>Mg(2+)</name>
        <dbReference type="ChEBI" id="CHEBI:18420"/>
    </cofactor>
    <text evidence="1">Binds 1 Mg(2+) ion per subunit.</text>
</comment>
<comment type="subunit">
    <text evidence="1">Heterohexadecamer of 8 large chains and 8 small chains; disulfide-linked. The disulfide link is formed within the large subunit homodimers.</text>
</comment>
<comment type="subcellular location">
    <subcellularLocation>
        <location>Plastid</location>
        <location>Chloroplast</location>
    </subcellularLocation>
</comment>
<comment type="PTM">
    <text evidence="1">The disulfide bond which can form in the large chain dimeric partners within the hexadecamer appears to be associated with oxidative stress and protein turnover.</text>
</comment>
<comment type="miscellaneous">
    <text evidence="1">The basic functional RuBisCO is composed of a large chain homodimer in a 'head-to-tail' conformation. In form I RuBisCO this homodimer is arranged in a barrel-like tetramer with the small subunits forming a tetrameric 'cap' on each end of the 'barrel'.</text>
</comment>
<comment type="similarity">
    <text evidence="1">Belongs to the RuBisCO large chain family. Type I subfamily.</text>
</comment>
<feature type="propeptide" id="PRO_0000031231" evidence="1">
    <location>
        <begin position="1"/>
        <end position="2"/>
    </location>
</feature>
<feature type="chain" id="PRO_0000031232" description="Ribulose bisphosphate carboxylase large chain">
    <location>
        <begin position="3"/>
        <end position="453" status="greater than"/>
    </location>
</feature>
<feature type="active site" description="Proton acceptor" evidence="1">
    <location>
        <position position="175"/>
    </location>
</feature>
<feature type="active site" description="Proton acceptor" evidence="1">
    <location>
        <position position="294"/>
    </location>
</feature>
<feature type="binding site" description="in homodimeric partner" evidence="1">
    <location>
        <position position="123"/>
    </location>
    <ligand>
        <name>substrate</name>
    </ligand>
</feature>
<feature type="binding site" evidence="1">
    <location>
        <position position="173"/>
    </location>
    <ligand>
        <name>substrate</name>
    </ligand>
</feature>
<feature type="binding site" evidence="1">
    <location>
        <position position="177"/>
    </location>
    <ligand>
        <name>substrate</name>
    </ligand>
</feature>
<feature type="binding site" description="via carbamate group" evidence="1">
    <location>
        <position position="201"/>
    </location>
    <ligand>
        <name>Mg(2+)</name>
        <dbReference type="ChEBI" id="CHEBI:18420"/>
    </ligand>
</feature>
<feature type="binding site" evidence="1">
    <location>
        <position position="203"/>
    </location>
    <ligand>
        <name>Mg(2+)</name>
        <dbReference type="ChEBI" id="CHEBI:18420"/>
    </ligand>
</feature>
<feature type="binding site" evidence="1">
    <location>
        <position position="204"/>
    </location>
    <ligand>
        <name>Mg(2+)</name>
        <dbReference type="ChEBI" id="CHEBI:18420"/>
    </ligand>
</feature>
<feature type="binding site" evidence="1">
    <location>
        <position position="295"/>
    </location>
    <ligand>
        <name>substrate</name>
    </ligand>
</feature>
<feature type="binding site" evidence="1">
    <location>
        <position position="327"/>
    </location>
    <ligand>
        <name>substrate</name>
    </ligand>
</feature>
<feature type="binding site" evidence="1">
    <location>
        <position position="379"/>
    </location>
    <ligand>
        <name>substrate</name>
    </ligand>
</feature>
<feature type="site" description="Transition state stabilizer" evidence="1">
    <location>
        <position position="334"/>
    </location>
</feature>
<feature type="modified residue" description="N-acetylproline" evidence="1">
    <location>
        <position position="3"/>
    </location>
</feature>
<feature type="modified residue" description="N6,N6,N6-trimethyllysine" evidence="1">
    <location>
        <position position="14"/>
    </location>
</feature>
<feature type="modified residue" description="N6-carboxylysine" evidence="1">
    <location>
        <position position="201"/>
    </location>
</feature>
<feature type="disulfide bond" description="Interchain; in linked form" evidence="1">
    <location>
        <position position="247"/>
    </location>
</feature>
<feature type="non-terminal residue">
    <location>
        <position position="453"/>
    </location>
</feature>
<evidence type="ECO:0000255" key="1">
    <source>
        <dbReference type="HAMAP-Rule" id="MF_01338"/>
    </source>
</evidence>
<accession>Q32283</accession>
<dbReference type="EC" id="4.1.1.39" evidence="1"/>
<dbReference type="EMBL" id="X81098">
    <property type="protein sequence ID" value="CAA57004.1"/>
    <property type="molecule type" value="Genomic_DNA"/>
</dbReference>
<dbReference type="PIR" id="S47229">
    <property type="entry name" value="S47229"/>
</dbReference>
<dbReference type="SMR" id="Q32283"/>
<dbReference type="GO" id="GO:0009507">
    <property type="term" value="C:chloroplast"/>
    <property type="evidence" value="ECO:0007669"/>
    <property type="project" value="UniProtKB-SubCell"/>
</dbReference>
<dbReference type="GO" id="GO:0000287">
    <property type="term" value="F:magnesium ion binding"/>
    <property type="evidence" value="ECO:0007669"/>
    <property type="project" value="InterPro"/>
</dbReference>
<dbReference type="GO" id="GO:0004497">
    <property type="term" value="F:monooxygenase activity"/>
    <property type="evidence" value="ECO:0007669"/>
    <property type="project" value="UniProtKB-KW"/>
</dbReference>
<dbReference type="GO" id="GO:0016984">
    <property type="term" value="F:ribulose-bisphosphate carboxylase activity"/>
    <property type="evidence" value="ECO:0007669"/>
    <property type="project" value="UniProtKB-EC"/>
</dbReference>
<dbReference type="GO" id="GO:0009853">
    <property type="term" value="P:photorespiration"/>
    <property type="evidence" value="ECO:0007669"/>
    <property type="project" value="UniProtKB-KW"/>
</dbReference>
<dbReference type="GO" id="GO:0019253">
    <property type="term" value="P:reductive pentose-phosphate cycle"/>
    <property type="evidence" value="ECO:0007669"/>
    <property type="project" value="UniProtKB-KW"/>
</dbReference>
<dbReference type="CDD" id="cd08212">
    <property type="entry name" value="RuBisCO_large_I"/>
    <property type="match status" value="1"/>
</dbReference>
<dbReference type="FunFam" id="3.20.20.110:FF:000003">
    <property type="entry name" value="Ribulose bisphosphate carboxylase large chain"/>
    <property type="match status" value="1"/>
</dbReference>
<dbReference type="FunFam" id="3.30.70.150:FF:000001">
    <property type="entry name" value="Ribulose bisphosphate carboxylase large chain"/>
    <property type="match status" value="1"/>
</dbReference>
<dbReference type="Gene3D" id="3.20.20.110">
    <property type="entry name" value="Ribulose bisphosphate carboxylase, large subunit, C-terminal domain"/>
    <property type="match status" value="1"/>
</dbReference>
<dbReference type="Gene3D" id="3.30.70.150">
    <property type="entry name" value="RuBisCO large subunit, N-terminal domain"/>
    <property type="match status" value="1"/>
</dbReference>
<dbReference type="HAMAP" id="MF_01338">
    <property type="entry name" value="RuBisCO_L_type1"/>
    <property type="match status" value="1"/>
</dbReference>
<dbReference type="InterPro" id="IPR033966">
    <property type="entry name" value="RuBisCO"/>
</dbReference>
<dbReference type="InterPro" id="IPR020878">
    <property type="entry name" value="RuBisCo_large_chain_AS"/>
</dbReference>
<dbReference type="InterPro" id="IPR000685">
    <property type="entry name" value="RuBisCO_lsu_C"/>
</dbReference>
<dbReference type="InterPro" id="IPR036376">
    <property type="entry name" value="RuBisCO_lsu_C_sf"/>
</dbReference>
<dbReference type="InterPro" id="IPR017443">
    <property type="entry name" value="RuBisCO_lsu_fd_N"/>
</dbReference>
<dbReference type="InterPro" id="IPR036422">
    <property type="entry name" value="RuBisCO_lsu_N_sf"/>
</dbReference>
<dbReference type="InterPro" id="IPR020888">
    <property type="entry name" value="RuBisCO_lsuI"/>
</dbReference>
<dbReference type="NCBIfam" id="NF003252">
    <property type="entry name" value="PRK04208.1"/>
    <property type="match status" value="1"/>
</dbReference>
<dbReference type="PANTHER" id="PTHR42704">
    <property type="entry name" value="RIBULOSE BISPHOSPHATE CARBOXYLASE"/>
    <property type="match status" value="1"/>
</dbReference>
<dbReference type="PANTHER" id="PTHR42704:SF15">
    <property type="entry name" value="RIBULOSE BISPHOSPHATE CARBOXYLASE LARGE CHAIN"/>
    <property type="match status" value="1"/>
</dbReference>
<dbReference type="Pfam" id="PF00016">
    <property type="entry name" value="RuBisCO_large"/>
    <property type="match status" value="1"/>
</dbReference>
<dbReference type="Pfam" id="PF02788">
    <property type="entry name" value="RuBisCO_large_N"/>
    <property type="match status" value="1"/>
</dbReference>
<dbReference type="SFLD" id="SFLDG01052">
    <property type="entry name" value="RuBisCO"/>
    <property type="match status" value="1"/>
</dbReference>
<dbReference type="SFLD" id="SFLDS00014">
    <property type="entry name" value="RuBisCO"/>
    <property type="match status" value="1"/>
</dbReference>
<dbReference type="SFLD" id="SFLDG00301">
    <property type="entry name" value="RuBisCO-like_proteins"/>
    <property type="match status" value="1"/>
</dbReference>
<dbReference type="SUPFAM" id="SSF51649">
    <property type="entry name" value="RuBisCo, C-terminal domain"/>
    <property type="match status" value="1"/>
</dbReference>
<dbReference type="SUPFAM" id="SSF54966">
    <property type="entry name" value="RuBisCO, large subunit, small (N-terminal) domain"/>
    <property type="match status" value="1"/>
</dbReference>
<dbReference type="PROSITE" id="PS00157">
    <property type="entry name" value="RUBISCO_LARGE"/>
    <property type="match status" value="1"/>
</dbReference>
<keyword id="KW-0007">Acetylation</keyword>
<keyword id="KW-0113">Calvin cycle</keyword>
<keyword id="KW-0120">Carbon dioxide fixation</keyword>
<keyword id="KW-0150">Chloroplast</keyword>
<keyword id="KW-1015">Disulfide bond</keyword>
<keyword id="KW-0456">Lyase</keyword>
<keyword id="KW-0460">Magnesium</keyword>
<keyword id="KW-0479">Metal-binding</keyword>
<keyword id="KW-0488">Methylation</keyword>
<keyword id="KW-0503">Monooxygenase</keyword>
<keyword id="KW-0560">Oxidoreductase</keyword>
<keyword id="KW-0601">Photorespiration</keyword>
<keyword id="KW-0602">Photosynthesis</keyword>
<keyword id="KW-0934">Plastid</keyword>
<sequence length="453" mass="50247">MSPQTETKAGVGFKAGVKEYKLTYYTPEYETKDTDILAAFRVTPQPGVPPEERGAAVAAESSTGTWTTVWTDGLTSLDRYKGRCYHIEPVPGEEDQFIAYVAYPLDLFEEGSVTNMFTSIVGNVFGFKALRALRLEDLRIPVAYVKTFQGPPHGIQVERDKLNKYGRPLLGCTIKPKLGLSAKNYGRAVYECLRGGLDFTKDDENVNSQPFMRWRDRFLFCAEAIYKSQAETGEIKGHYLNATAGTCEEMIKRAVFARELGVPIVMHDYLTGGFTANTSLAHYCRDNGLLLHIHRAMHAVIDRQKNHGMHFRVLAKALRMSGGDHIHSGTVVGKLEGERDITLGFVDLLRDDYIEKDRSRGIYFTQDWVSLPGVLPVASRGIHVWHMPALTEIFGDDSVLQFGGGTIGHPWGNAPGAVANRVALEACVKARNEGRDLAAEGGEIIREACKWSP</sequence>
<protein>
    <recommendedName>
        <fullName evidence="1">Ribulose bisphosphate carboxylase large chain</fullName>
        <shortName evidence="1">RuBisCO large subunit</shortName>
        <ecNumber evidence="1">4.1.1.39</ecNumber>
    </recommendedName>
</protein>
<proteinExistence type="inferred from homology"/>
<reference key="1">
    <citation type="journal article" date="1995" name="J. Mol. Evol.">
        <title>Comparison of the evolution of ribulose-1, 5-biphosphate carboxylase (rbcL) and atpB-rbcL noncoding spacer sequences in a recent plant group, the tribe Rubieae (Rubiaceae).</title>
        <authorList>
            <person name="Manen J.F."/>
            <person name="Natali A."/>
        </authorList>
    </citation>
    <scope>NUCLEOTIDE SEQUENCE [GENOMIC DNA]</scope>
</reference>
<name>RBL_GALEL</name>